<sequence length="215" mass="23675">MNLLIMGLPGAGKGTQAEFIVKNYGVNHISTGDMFRAAMKNETEMGKLAKSFIDKGELVPDEVTNGIVKERLAQDDIKASGFLLDGYPRTIDQAHALDTMLEELGIKLDAVVNIVVNPNILVDRLSGRYICRNCGATYHKIFNPTKVEGTCDVCGSHDLYQRADDVPETVKNRLDVNIKESAPIIEHYTELGLVKNIEGEQEISQVTDDIKKVLG</sequence>
<protein>
    <recommendedName>
        <fullName evidence="1">Adenylate kinase</fullName>
        <shortName evidence="1">AK</shortName>
        <ecNumber evidence="1">2.7.4.3</ecNumber>
    </recommendedName>
    <alternativeName>
        <fullName evidence="1">ATP-AMP transphosphorylase</fullName>
    </alternativeName>
    <alternativeName>
        <fullName evidence="1">ATP:AMP phosphotransferase</fullName>
    </alternativeName>
    <alternativeName>
        <fullName evidence="1">Adenylate monophosphate kinase</fullName>
    </alternativeName>
</protein>
<reference key="1">
    <citation type="journal article" date="2006" name="Proc. Natl. Acad. Sci. U.S.A.">
        <title>Comparative genomics of the lactic acid bacteria.</title>
        <authorList>
            <person name="Makarova K.S."/>
            <person name="Slesarev A."/>
            <person name="Wolf Y.I."/>
            <person name="Sorokin A."/>
            <person name="Mirkin B."/>
            <person name="Koonin E.V."/>
            <person name="Pavlov A."/>
            <person name="Pavlova N."/>
            <person name="Karamychev V."/>
            <person name="Polouchine N."/>
            <person name="Shakhova V."/>
            <person name="Grigoriev I."/>
            <person name="Lou Y."/>
            <person name="Rohksar D."/>
            <person name="Lucas S."/>
            <person name="Huang K."/>
            <person name="Goodstein D.M."/>
            <person name="Hawkins T."/>
            <person name="Plengvidhya V."/>
            <person name="Welker D."/>
            <person name="Hughes J."/>
            <person name="Goh Y."/>
            <person name="Benson A."/>
            <person name="Baldwin K."/>
            <person name="Lee J.-H."/>
            <person name="Diaz-Muniz I."/>
            <person name="Dosti B."/>
            <person name="Smeianov V."/>
            <person name="Wechter W."/>
            <person name="Barabote R."/>
            <person name="Lorca G."/>
            <person name="Altermann E."/>
            <person name="Barrangou R."/>
            <person name="Ganesan B."/>
            <person name="Xie Y."/>
            <person name="Rawsthorne H."/>
            <person name="Tamir D."/>
            <person name="Parker C."/>
            <person name="Breidt F."/>
            <person name="Broadbent J.R."/>
            <person name="Hutkins R."/>
            <person name="O'Sullivan D."/>
            <person name="Steele J."/>
            <person name="Unlu G."/>
            <person name="Saier M.H. Jr."/>
            <person name="Klaenhammer T."/>
            <person name="Richardson P."/>
            <person name="Kozyavkin S."/>
            <person name="Weimer B.C."/>
            <person name="Mills D.A."/>
        </authorList>
    </citation>
    <scope>NUCLEOTIDE SEQUENCE [LARGE SCALE GENOMIC DNA]</scope>
    <source>
        <strain>SK11</strain>
    </source>
</reference>
<keyword id="KW-0067">ATP-binding</keyword>
<keyword id="KW-0963">Cytoplasm</keyword>
<keyword id="KW-0418">Kinase</keyword>
<keyword id="KW-0479">Metal-binding</keyword>
<keyword id="KW-0545">Nucleotide biosynthesis</keyword>
<keyword id="KW-0547">Nucleotide-binding</keyword>
<keyword id="KW-0808">Transferase</keyword>
<keyword id="KW-0862">Zinc</keyword>
<name>KAD_LACLS</name>
<evidence type="ECO:0000255" key="1">
    <source>
        <dbReference type="HAMAP-Rule" id="MF_00235"/>
    </source>
</evidence>
<organism>
    <name type="scientific">Lactococcus lactis subsp. cremoris (strain SK11)</name>
    <dbReference type="NCBI Taxonomy" id="272622"/>
    <lineage>
        <taxon>Bacteria</taxon>
        <taxon>Bacillati</taxon>
        <taxon>Bacillota</taxon>
        <taxon>Bacilli</taxon>
        <taxon>Lactobacillales</taxon>
        <taxon>Streptococcaceae</taxon>
        <taxon>Lactococcus</taxon>
        <taxon>Lactococcus cremoris subsp. cremoris</taxon>
    </lineage>
</organism>
<gene>
    <name evidence="1" type="primary">adk</name>
    <name type="ordered locus">LACR_2380</name>
</gene>
<dbReference type="EC" id="2.7.4.3" evidence="1"/>
<dbReference type="EMBL" id="CP000425">
    <property type="protein sequence ID" value="ABJ73826.1"/>
    <property type="molecule type" value="Genomic_DNA"/>
</dbReference>
<dbReference type="RefSeq" id="WP_011677149.1">
    <property type="nucleotide sequence ID" value="NC_008527.1"/>
</dbReference>
<dbReference type="SMR" id="Q02W46"/>
<dbReference type="KEGG" id="llc:LACR_2380"/>
<dbReference type="HOGENOM" id="CLU_032354_1_2_9"/>
<dbReference type="UniPathway" id="UPA00588">
    <property type="reaction ID" value="UER00649"/>
</dbReference>
<dbReference type="Proteomes" id="UP000000240">
    <property type="component" value="Chromosome"/>
</dbReference>
<dbReference type="GO" id="GO:0005737">
    <property type="term" value="C:cytoplasm"/>
    <property type="evidence" value="ECO:0007669"/>
    <property type="project" value="UniProtKB-SubCell"/>
</dbReference>
<dbReference type="GO" id="GO:0004017">
    <property type="term" value="F:adenylate kinase activity"/>
    <property type="evidence" value="ECO:0007669"/>
    <property type="project" value="UniProtKB-UniRule"/>
</dbReference>
<dbReference type="GO" id="GO:0005524">
    <property type="term" value="F:ATP binding"/>
    <property type="evidence" value="ECO:0007669"/>
    <property type="project" value="UniProtKB-UniRule"/>
</dbReference>
<dbReference type="GO" id="GO:0008270">
    <property type="term" value="F:zinc ion binding"/>
    <property type="evidence" value="ECO:0007669"/>
    <property type="project" value="UniProtKB-UniRule"/>
</dbReference>
<dbReference type="GO" id="GO:0044209">
    <property type="term" value="P:AMP salvage"/>
    <property type="evidence" value="ECO:0007669"/>
    <property type="project" value="UniProtKB-UniRule"/>
</dbReference>
<dbReference type="CDD" id="cd01428">
    <property type="entry name" value="ADK"/>
    <property type="match status" value="1"/>
</dbReference>
<dbReference type="FunFam" id="3.40.50.300:FF:000106">
    <property type="entry name" value="Adenylate kinase mitochondrial"/>
    <property type="match status" value="1"/>
</dbReference>
<dbReference type="Gene3D" id="3.40.50.300">
    <property type="entry name" value="P-loop containing nucleotide triphosphate hydrolases"/>
    <property type="match status" value="1"/>
</dbReference>
<dbReference type="HAMAP" id="MF_00235">
    <property type="entry name" value="Adenylate_kinase_Adk"/>
    <property type="match status" value="1"/>
</dbReference>
<dbReference type="InterPro" id="IPR006259">
    <property type="entry name" value="Adenyl_kin_sub"/>
</dbReference>
<dbReference type="InterPro" id="IPR000850">
    <property type="entry name" value="Adenylat/UMP-CMP_kin"/>
</dbReference>
<dbReference type="InterPro" id="IPR033690">
    <property type="entry name" value="Adenylat_kinase_CS"/>
</dbReference>
<dbReference type="InterPro" id="IPR007862">
    <property type="entry name" value="Adenylate_kinase_lid-dom"/>
</dbReference>
<dbReference type="InterPro" id="IPR027417">
    <property type="entry name" value="P-loop_NTPase"/>
</dbReference>
<dbReference type="NCBIfam" id="TIGR01351">
    <property type="entry name" value="adk"/>
    <property type="match status" value="1"/>
</dbReference>
<dbReference type="NCBIfam" id="NF001380">
    <property type="entry name" value="PRK00279.1-2"/>
    <property type="match status" value="1"/>
</dbReference>
<dbReference type="NCBIfam" id="NF001381">
    <property type="entry name" value="PRK00279.1-3"/>
    <property type="match status" value="1"/>
</dbReference>
<dbReference type="NCBIfam" id="NF001382">
    <property type="entry name" value="PRK00279.1-4"/>
    <property type="match status" value="1"/>
</dbReference>
<dbReference type="PANTHER" id="PTHR23359">
    <property type="entry name" value="NUCLEOTIDE KINASE"/>
    <property type="match status" value="1"/>
</dbReference>
<dbReference type="Pfam" id="PF00406">
    <property type="entry name" value="ADK"/>
    <property type="match status" value="1"/>
</dbReference>
<dbReference type="Pfam" id="PF05191">
    <property type="entry name" value="ADK_lid"/>
    <property type="match status" value="1"/>
</dbReference>
<dbReference type="PRINTS" id="PR00094">
    <property type="entry name" value="ADENYLTKNASE"/>
</dbReference>
<dbReference type="SUPFAM" id="SSF52540">
    <property type="entry name" value="P-loop containing nucleoside triphosphate hydrolases"/>
    <property type="match status" value="1"/>
</dbReference>
<dbReference type="PROSITE" id="PS00113">
    <property type="entry name" value="ADENYLATE_KINASE"/>
    <property type="match status" value="1"/>
</dbReference>
<comment type="function">
    <text evidence="1">Catalyzes the reversible transfer of the terminal phosphate group between ATP and AMP. Plays an important role in cellular energy homeostasis and in adenine nucleotide metabolism.</text>
</comment>
<comment type="catalytic activity">
    <reaction evidence="1">
        <text>AMP + ATP = 2 ADP</text>
        <dbReference type="Rhea" id="RHEA:12973"/>
        <dbReference type="ChEBI" id="CHEBI:30616"/>
        <dbReference type="ChEBI" id="CHEBI:456215"/>
        <dbReference type="ChEBI" id="CHEBI:456216"/>
        <dbReference type="EC" id="2.7.4.3"/>
    </reaction>
</comment>
<comment type="pathway">
    <text evidence="1">Purine metabolism; AMP biosynthesis via salvage pathway; AMP from ADP: step 1/1.</text>
</comment>
<comment type="subunit">
    <text evidence="1">Monomer.</text>
</comment>
<comment type="subcellular location">
    <subcellularLocation>
        <location evidence="1">Cytoplasm</location>
    </subcellularLocation>
</comment>
<comment type="domain">
    <text evidence="1">Consists of three domains, a large central CORE domain and two small peripheral domains, NMPbind and LID, which undergo movements during catalysis. The LID domain closes over the site of phosphoryl transfer upon ATP binding. Assembling and dissambling the active center during each catalytic cycle provides an effective means to prevent ATP hydrolysis. Some bacteria have evolved a zinc-coordinating structure that stabilizes the LID domain.</text>
</comment>
<comment type="similarity">
    <text evidence="1">Belongs to the adenylate kinase family.</text>
</comment>
<accession>Q02W46</accession>
<feature type="chain" id="PRO_1000021736" description="Adenylate kinase">
    <location>
        <begin position="1"/>
        <end position="215"/>
    </location>
</feature>
<feature type="region of interest" description="NMP" evidence="1">
    <location>
        <begin position="30"/>
        <end position="59"/>
    </location>
</feature>
<feature type="region of interest" description="LID" evidence="1">
    <location>
        <begin position="127"/>
        <end position="165"/>
    </location>
</feature>
<feature type="binding site" evidence="1">
    <location>
        <begin position="10"/>
        <end position="15"/>
    </location>
    <ligand>
        <name>ATP</name>
        <dbReference type="ChEBI" id="CHEBI:30616"/>
    </ligand>
</feature>
<feature type="binding site" evidence="1">
    <location>
        <position position="31"/>
    </location>
    <ligand>
        <name>AMP</name>
        <dbReference type="ChEBI" id="CHEBI:456215"/>
    </ligand>
</feature>
<feature type="binding site" evidence="1">
    <location>
        <position position="36"/>
    </location>
    <ligand>
        <name>AMP</name>
        <dbReference type="ChEBI" id="CHEBI:456215"/>
    </ligand>
</feature>
<feature type="binding site" evidence="1">
    <location>
        <begin position="57"/>
        <end position="59"/>
    </location>
    <ligand>
        <name>AMP</name>
        <dbReference type="ChEBI" id="CHEBI:456215"/>
    </ligand>
</feature>
<feature type="binding site" evidence="1">
    <location>
        <begin position="86"/>
        <end position="89"/>
    </location>
    <ligand>
        <name>AMP</name>
        <dbReference type="ChEBI" id="CHEBI:456215"/>
    </ligand>
</feature>
<feature type="binding site" evidence="1">
    <location>
        <position position="93"/>
    </location>
    <ligand>
        <name>AMP</name>
        <dbReference type="ChEBI" id="CHEBI:456215"/>
    </ligand>
</feature>
<feature type="binding site" evidence="1">
    <location>
        <position position="128"/>
    </location>
    <ligand>
        <name>ATP</name>
        <dbReference type="ChEBI" id="CHEBI:30616"/>
    </ligand>
</feature>
<feature type="binding site" evidence="1">
    <location>
        <position position="131"/>
    </location>
    <ligand>
        <name>Zn(2+)</name>
        <dbReference type="ChEBI" id="CHEBI:29105"/>
        <note>structural</note>
    </ligand>
</feature>
<feature type="binding site" evidence="1">
    <location>
        <position position="134"/>
    </location>
    <ligand>
        <name>Zn(2+)</name>
        <dbReference type="ChEBI" id="CHEBI:29105"/>
        <note>structural</note>
    </ligand>
</feature>
<feature type="binding site" evidence="1">
    <location>
        <begin position="137"/>
        <end position="138"/>
    </location>
    <ligand>
        <name>ATP</name>
        <dbReference type="ChEBI" id="CHEBI:30616"/>
    </ligand>
</feature>
<feature type="binding site" evidence="1">
    <location>
        <position position="151"/>
    </location>
    <ligand>
        <name>Zn(2+)</name>
        <dbReference type="ChEBI" id="CHEBI:29105"/>
        <note>structural</note>
    </ligand>
</feature>
<feature type="binding site" evidence="1">
    <location>
        <position position="154"/>
    </location>
    <ligand>
        <name>Zn(2+)</name>
        <dbReference type="ChEBI" id="CHEBI:29105"/>
        <note>structural</note>
    </ligand>
</feature>
<feature type="binding site" evidence="1">
    <location>
        <position position="162"/>
    </location>
    <ligand>
        <name>AMP</name>
        <dbReference type="ChEBI" id="CHEBI:456215"/>
    </ligand>
</feature>
<feature type="binding site" evidence="1">
    <location>
        <position position="173"/>
    </location>
    <ligand>
        <name>AMP</name>
        <dbReference type="ChEBI" id="CHEBI:456215"/>
    </ligand>
</feature>
<feature type="binding site" evidence="1">
    <location>
        <position position="201"/>
    </location>
    <ligand>
        <name>ATP</name>
        <dbReference type="ChEBI" id="CHEBI:30616"/>
    </ligand>
</feature>
<proteinExistence type="inferred from homology"/>